<proteinExistence type="inferred from homology"/>
<organism>
    <name type="scientific">Methanosarcina barkeri (strain Fusaro / DSM 804)</name>
    <dbReference type="NCBI Taxonomy" id="269797"/>
    <lineage>
        <taxon>Archaea</taxon>
        <taxon>Methanobacteriati</taxon>
        <taxon>Methanobacteriota</taxon>
        <taxon>Stenosarchaea group</taxon>
        <taxon>Methanomicrobia</taxon>
        <taxon>Methanosarcinales</taxon>
        <taxon>Methanosarcinaceae</taxon>
        <taxon>Methanosarcina</taxon>
    </lineage>
</organism>
<accession>Q466A1</accession>
<keyword id="KW-0342">GTP-binding</keyword>
<keyword id="KW-0547">Nucleotide-binding</keyword>
<keyword id="KW-0548">Nucleotidyltransferase</keyword>
<keyword id="KW-0808">Transferase</keyword>
<sequence length="208" mass="22916">MKAVIPYKKSSAKSRLSPVLTREEREEFVDLMLNQVIDTLKEAGVGTIDILSPSMYGLENMTKANVLLDKNDLNEALNGYLEQAEEPVIIVMADLPLLSPDHVKGITSTKEDVCIVPGKGGGTNALFIKNPSCYRVRYYGSSFLTHCSIAEKTGQSVEVYDSFFAGTDIDEPEDLVELLIHGSGAAKEYISKKFRLEMSRGRVGLVHI</sequence>
<comment type="function">
    <text evidence="1">Guanylyltransferase that catalyzes the activation of (2S)-2-phospholactate (2-PL) as (2S)-lactyl-2-diphospho-5'-guanosine, via the condensation of 2-PL with GTP. It is involved in the biosynthesis of coenzyme F420, a hydride carrier cofactor.</text>
</comment>
<comment type="catalytic activity">
    <reaction evidence="1">
        <text>(2S)-2-phospholactate + GTP + H(+) = (2S)-lactyl-2-diphospho-5'-guanosine + diphosphate</text>
        <dbReference type="Rhea" id="RHEA:63424"/>
        <dbReference type="ChEBI" id="CHEBI:15378"/>
        <dbReference type="ChEBI" id="CHEBI:33019"/>
        <dbReference type="ChEBI" id="CHEBI:37565"/>
        <dbReference type="ChEBI" id="CHEBI:59435"/>
        <dbReference type="ChEBI" id="CHEBI:59906"/>
        <dbReference type="EC" id="2.7.7.68"/>
    </reaction>
</comment>
<comment type="pathway">
    <text evidence="1">Cofactor biosynthesis; coenzyme F420 biosynthesis.</text>
</comment>
<comment type="subunit">
    <text evidence="1">Homodimer.</text>
</comment>
<comment type="similarity">
    <text evidence="1">Belongs to the CofC family.</text>
</comment>
<dbReference type="EC" id="2.7.7.68" evidence="1"/>
<dbReference type="EMBL" id="CP000099">
    <property type="protein sequence ID" value="AAZ72291.1"/>
    <property type="molecule type" value="Genomic_DNA"/>
</dbReference>
<dbReference type="SMR" id="Q466A1"/>
<dbReference type="STRING" id="269797.Mbar_A3418"/>
<dbReference type="PaxDb" id="269797-Mbar_A3418"/>
<dbReference type="KEGG" id="mba:Mbar_A3418"/>
<dbReference type="eggNOG" id="arCOG04472">
    <property type="taxonomic scope" value="Archaea"/>
</dbReference>
<dbReference type="HOGENOM" id="CLU_076569_2_0_2"/>
<dbReference type="OrthoDB" id="11179at2157"/>
<dbReference type="UniPathway" id="UPA00071"/>
<dbReference type="GO" id="GO:0005525">
    <property type="term" value="F:GTP binding"/>
    <property type="evidence" value="ECO:0007669"/>
    <property type="project" value="UniProtKB-KW"/>
</dbReference>
<dbReference type="GO" id="GO:0043814">
    <property type="term" value="F:phospholactate guanylyltransferase activity"/>
    <property type="evidence" value="ECO:0007669"/>
    <property type="project" value="UniProtKB-EC"/>
</dbReference>
<dbReference type="GO" id="GO:0052645">
    <property type="term" value="P:F420-0 metabolic process"/>
    <property type="evidence" value="ECO:0007669"/>
    <property type="project" value="UniProtKB-UniRule"/>
</dbReference>
<dbReference type="Gene3D" id="6.10.140.50">
    <property type="match status" value="1"/>
</dbReference>
<dbReference type="Gene3D" id="3.90.550.10">
    <property type="entry name" value="Spore Coat Polysaccharide Biosynthesis Protein SpsA, Chain A"/>
    <property type="match status" value="1"/>
</dbReference>
<dbReference type="HAMAP" id="MF_02114">
    <property type="entry name" value="CofC"/>
    <property type="match status" value="1"/>
</dbReference>
<dbReference type="InterPro" id="IPR002835">
    <property type="entry name" value="CofC"/>
</dbReference>
<dbReference type="InterPro" id="IPR029044">
    <property type="entry name" value="Nucleotide-diphossugar_trans"/>
</dbReference>
<dbReference type="NCBIfam" id="TIGR03552">
    <property type="entry name" value="F420_cofC"/>
    <property type="match status" value="1"/>
</dbReference>
<dbReference type="PANTHER" id="PTHR40392">
    <property type="entry name" value="2-PHOSPHO-L-LACTATE GUANYLYLTRANSFERASE"/>
    <property type="match status" value="1"/>
</dbReference>
<dbReference type="PANTHER" id="PTHR40392:SF1">
    <property type="entry name" value="2-PHOSPHO-L-LACTATE GUANYLYLTRANSFERASE"/>
    <property type="match status" value="1"/>
</dbReference>
<dbReference type="Pfam" id="PF01983">
    <property type="entry name" value="CofC"/>
    <property type="match status" value="1"/>
</dbReference>
<dbReference type="SUPFAM" id="SSF53448">
    <property type="entry name" value="Nucleotide-diphospho-sugar transferases"/>
    <property type="match status" value="1"/>
</dbReference>
<protein>
    <recommendedName>
        <fullName evidence="1">2-phospho-L-lactate guanylyltransferase</fullName>
        <shortName evidence="1">LP guanylyltransferase</shortName>
        <ecNumber evidence="1">2.7.7.68</ecNumber>
    </recommendedName>
</protein>
<gene>
    <name evidence="1" type="primary">cofC</name>
    <name type="ordered locus">Mbar_A3418</name>
</gene>
<feature type="chain" id="PRO_0000398756" description="2-phospho-L-lactate guanylyltransferase">
    <location>
        <begin position="1"/>
        <end position="208"/>
    </location>
</feature>
<reference key="1">
    <citation type="journal article" date="2006" name="J. Bacteriol.">
        <title>The Methanosarcina barkeri genome: comparative analysis with Methanosarcina acetivorans and Methanosarcina mazei reveals extensive rearrangement within methanosarcinal genomes.</title>
        <authorList>
            <person name="Maeder D.L."/>
            <person name="Anderson I."/>
            <person name="Brettin T.S."/>
            <person name="Bruce D.C."/>
            <person name="Gilna P."/>
            <person name="Han C.S."/>
            <person name="Lapidus A."/>
            <person name="Metcalf W.W."/>
            <person name="Saunders E."/>
            <person name="Tapia R."/>
            <person name="Sowers K.R."/>
        </authorList>
    </citation>
    <scope>NUCLEOTIDE SEQUENCE [LARGE SCALE GENOMIC DNA]</scope>
    <source>
        <strain>Fusaro / DSM 804</strain>
    </source>
</reference>
<name>COFC_METBF</name>
<evidence type="ECO:0000255" key="1">
    <source>
        <dbReference type="HAMAP-Rule" id="MF_02114"/>
    </source>
</evidence>